<comment type="subcellular location">
    <subcellularLocation>
        <location evidence="3">Nucleus</location>
    </subcellularLocation>
</comment>
<comment type="similarity">
    <text evidence="3">Belongs to the NK-2 homeobox family.</text>
</comment>
<proteinExistence type="evidence at protein level"/>
<accession>O15522</accession>
<accession>Q8IUT7</accession>
<keyword id="KW-0217">Developmental protein</keyword>
<keyword id="KW-0238">DNA-binding</keyword>
<keyword id="KW-0371">Homeobox</keyword>
<keyword id="KW-0539">Nucleus</keyword>
<keyword id="KW-1267">Proteomics identification</keyword>
<keyword id="KW-1185">Reference proteome</keyword>
<evidence type="ECO:0000255" key="1">
    <source>
        <dbReference type="PROSITE-ProRule" id="PRU00108"/>
    </source>
</evidence>
<evidence type="ECO:0000256" key="2">
    <source>
        <dbReference type="SAM" id="MobiDB-lite"/>
    </source>
</evidence>
<evidence type="ECO:0000305" key="3"/>
<name>NKX28_HUMAN</name>
<protein>
    <recommendedName>
        <fullName>Homeobox protein Nkx-2.8</fullName>
    </recommendedName>
    <alternativeName>
        <fullName>Homeobox protein NK-2 homolog H</fullName>
    </alternativeName>
</protein>
<organism>
    <name type="scientific">Homo sapiens</name>
    <name type="common">Human</name>
    <dbReference type="NCBI Taxonomy" id="9606"/>
    <lineage>
        <taxon>Eukaryota</taxon>
        <taxon>Metazoa</taxon>
        <taxon>Chordata</taxon>
        <taxon>Craniata</taxon>
        <taxon>Vertebrata</taxon>
        <taxon>Euteleostomi</taxon>
        <taxon>Mammalia</taxon>
        <taxon>Eutheria</taxon>
        <taxon>Euarchontoglires</taxon>
        <taxon>Primates</taxon>
        <taxon>Haplorrhini</taxon>
        <taxon>Catarrhini</taxon>
        <taxon>Hominidae</taxon>
        <taxon>Homo</taxon>
    </lineage>
</organism>
<feature type="chain" id="PRO_0000048943" description="Homeobox protein Nkx-2.8">
    <location>
        <begin position="1"/>
        <end position="239"/>
    </location>
</feature>
<feature type="DNA-binding region" description="Homeobox" evidence="1">
    <location>
        <begin position="84"/>
        <end position="143"/>
    </location>
</feature>
<feature type="region of interest" description="Disordered" evidence="2">
    <location>
        <begin position="1"/>
        <end position="87"/>
    </location>
</feature>
<feature type="compositionally biased region" description="Polar residues" evidence="2">
    <location>
        <begin position="1"/>
        <end position="11"/>
    </location>
</feature>
<feature type="compositionally biased region" description="Basic and acidic residues" evidence="2">
    <location>
        <begin position="21"/>
        <end position="32"/>
    </location>
</feature>
<feature type="compositionally biased region" description="Low complexity" evidence="2">
    <location>
        <begin position="62"/>
        <end position="79"/>
    </location>
</feature>
<feature type="sequence variant" id="VAR_003753">
    <original>D</original>
    <variation>A</variation>
    <location>
        <position position="16"/>
    </location>
</feature>
<feature type="sequence conflict" description="In Ref. 1; AAC71081/AAC71082." evidence="3" ref="1">
    <original>D</original>
    <variation>G</variation>
    <location>
        <position position="16"/>
    </location>
</feature>
<reference key="1">
    <citation type="journal article" date="1998" name="J. Biol. Chem.">
        <title>A novel nk-2-related transcription factor associated with human fetal liver and hepatocellular carcinoma.</title>
        <authorList>
            <person name="Apergis G.A."/>
            <person name="Crawford N."/>
            <person name="Ghosh D."/>
            <person name="Steppan C.M."/>
            <person name="Vorachek W.R."/>
            <person name="Wen P."/>
            <person name="Locker J."/>
        </authorList>
    </citation>
    <scope>NUCLEOTIDE SEQUENCE [GENOMIC DNA / MRNA]</scope>
</reference>
<reference key="2">
    <citation type="journal article" date="2004" name="Nat. Genet.">
        <title>Complete sequencing and characterization of 21,243 full-length human cDNAs.</title>
        <authorList>
            <person name="Ota T."/>
            <person name="Suzuki Y."/>
            <person name="Nishikawa T."/>
            <person name="Otsuki T."/>
            <person name="Sugiyama T."/>
            <person name="Irie R."/>
            <person name="Wakamatsu A."/>
            <person name="Hayashi K."/>
            <person name="Sato H."/>
            <person name="Nagai K."/>
            <person name="Kimura K."/>
            <person name="Makita H."/>
            <person name="Sekine M."/>
            <person name="Obayashi M."/>
            <person name="Nishi T."/>
            <person name="Shibahara T."/>
            <person name="Tanaka T."/>
            <person name="Ishii S."/>
            <person name="Yamamoto J."/>
            <person name="Saito K."/>
            <person name="Kawai Y."/>
            <person name="Isono Y."/>
            <person name="Nakamura Y."/>
            <person name="Nagahari K."/>
            <person name="Murakami K."/>
            <person name="Yasuda T."/>
            <person name="Iwayanagi T."/>
            <person name="Wagatsuma M."/>
            <person name="Shiratori A."/>
            <person name="Sudo H."/>
            <person name="Hosoiri T."/>
            <person name="Kaku Y."/>
            <person name="Kodaira H."/>
            <person name="Kondo H."/>
            <person name="Sugawara M."/>
            <person name="Takahashi M."/>
            <person name="Kanda K."/>
            <person name="Yokoi T."/>
            <person name="Furuya T."/>
            <person name="Kikkawa E."/>
            <person name="Omura Y."/>
            <person name="Abe K."/>
            <person name="Kamihara K."/>
            <person name="Katsuta N."/>
            <person name="Sato K."/>
            <person name="Tanikawa M."/>
            <person name="Yamazaki M."/>
            <person name="Ninomiya K."/>
            <person name="Ishibashi T."/>
            <person name="Yamashita H."/>
            <person name="Murakawa K."/>
            <person name="Fujimori K."/>
            <person name="Tanai H."/>
            <person name="Kimata M."/>
            <person name="Watanabe M."/>
            <person name="Hiraoka S."/>
            <person name="Chiba Y."/>
            <person name="Ishida S."/>
            <person name="Ono Y."/>
            <person name="Takiguchi S."/>
            <person name="Watanabe S."/>
            <person name="Yosida M."/>
            <person name="Hotuta T."/>
            <person name="Kusano J."/>
            <person name="Kanehori K."/>
            <person name="Takahashi-Fujii A."/>
            <person name="Hara H."/>
            <person name="Tanase T.-O."/>
            <person name="Nomura Y."/>
            <person name="Togiya S."/>
            <person name="Komai F."/>
            <person name="Hara R."/>
            <person name="Takeuchi K."/>
            <person name="Arita M."/>
            <person name="Imose N."/>
            <person name="Musashino K."/>
            <person name="Yuuki H."/>
            <person name="Oshima A."/>
            <person name="Sasaki N."/>
            <person name="Aotsuka S."/>
            <person name="Yoshikawa Y."/>
            <person name="Matsunawa H."/>
            <person name="Ichihara T."/>
            <person name="Shiohata N."/>
            <person name="Sano S."/>
            <person name="Moriya S."/>
            <person name="Momiyama H."/>
            <person name="Satoh N."/>
            <person name="Takami S."/>
            <person name="Terashima Y."/>
            <person name="Suzuki O."/>
            <person name="Nakagawa S."/>
            <person name="Senoh A."/>
            <person name="Mizoguchi H."/>
            <person name="Goto Y."/>
            <person name="Shimizu F."/>
            <person name="Wakebe H."/>
            <person name="Hishigaki H."/>
            <person name="Watanabe T."/>
            <person name="Sugiyama A."/>
            <person name="Takemoto M."/>
            <person name="Kawakami B."/>
            <person name="Yamazaki M."/>
            <person name="Watanabe K."/>
            <person name="Kumagai A."/>
            <person name="Itakura S."/>
            <person name="Fukuzumi Y."/>
            <person name="Fujimori Y."/>
            <person name="Komiyama M."/>
            <person name="Tashiro H."/>
            <person name="Tanigami A."/>
            <person name="Fujiwara T."/>
            <person name="Ono T."/>
            <person name="Yamada K."/>
            <person name="Fujii Y."/>
            <person name="Ozaki K."/>
            <person name="Hirao M."/>
            <person name="Ohmori Y."/>
            <person name="Kawabata A."/>
            <person name="Hikiji T."/>
            <person name="Kobatake N."/>
            <person name="Inagaki H."/>
            <person name="Ikema Y."/>
            <person name="Okamoto S."/>
            <person name="Okitani R."/>
            <person name="Kawakami T."/>
            <person name="Noguchi S."/>
            <person name="Itoh T."/>
            <person name="Shigeta K."/>
            <person name="Senba T."/>
            <person name="Matsumura K."/>
            <person name="Nakajima Y."/>
            <person name="Mizuno T."/>
            <person name="Morinaga M."/>
            <person name="Sasaki M."/>
            <person name="Togashi T."/>
            <person name="Oyama M."/>
            <person name="Hata H."/>
            <person name="Watanabe M."/>
            <person name="Komatsu T."/>
            <person name="Mizushima-Sugano J."/>
            <person name="Satoh T."/>
            <person name="Shirai Y."/>
            <person name="Takahashi Y."/>
            <person name="Nakagawa K."/>
            <person name="Okumura K."/>
            <person name="Nagase T."/>
            <person name="Nomura N."/>
            <person name="Kikuchi H."/>
            <person name="Masuho Y."/>
            <person name="Yamashita R."/>
            <person name="Nakai K."/>
            <person name="Yada T."/>
            <person name="Nakamura Y."/>
            <person name="Ohara O."/>
            <person name="Isogai T."/>
            <person name="Sugano S."/>
        </authorList>
    </citation>
    <scope>NUCLEOTIDE SEQUENCE [LARGE SCALE MRNA]</scope>
    <source>
        <tissue>Tongue</tissue>
    </source>
</reference>
<reference key="3">
    <citation type="journal article" date="2004" name="Genome Res.">
        <title>The status, quality, and expansion of the NIH full-length cDNA project: the Mammalian Gene Collection (MGC).</title>
        <authorList>
            <consortium name="The MGC Project Team"/>
        </authorList>
    </citation>
    <scope>NUCLEOTIDE SEQUENCE [LARGE SCALE MRNA]</scope>
    <source>
        <tissue>Brain</tissue>
    </source>
</reference>
<dbReference type="EMBL" id="AF000295">
    <property type="protein sequence ID" value="AAC71081.1"/>
    <property type="molecule type" value="mRNA"/>
</dbReference>
<dbReference type="EMBL" id="AF000297">
    <property type="protein sequence ID" value="AAC71082.1"/>
    <property type="molecule type" value="Genomic_DNA"/>
</dbReference>
<dbReference type="EMBL" id="AF000296">
    <property type="protein sequence ID" value="AAC71082.1"/>
    <property type="status" value="JOINED"/>
    <property type="molecule type" value="Genomic_DNA"/>
</dbReference>
<dbReference type="EMBL" id="AK313537">
    <property type="protein sequence ID" value="BAG36314.1"/>
    <property type="molecule type" value="mRNA"/>
</dbReference>
<dbReference type="EMBL" id="BC041090">
    <property type="protein sequence ID" value="AAH41090.1"/>
    <property type="molecule type" value="mRNA"/>
</dbReference>
<dbReference type="CCDS" id="CCDS9660.1"/>
<dbReference type="RefSeq" id="NP_055175.2">
    <property type="nucleotide sequence ID" value="NM_014360.3"/>
</dbReference>
<dbReference type="SMR" id="O15522"/>
<dbReference type="FunCoup" id="O15522">
    <property type="interactions" value="280"/>
</dbReference>
<dbReference type="STRING" id="9606.ENSP00000258829"/>
<dbReference type="BioMuta" id="NKX2-8"/>
<dbReference type="jPOST" id="O15522"/>
<dbReference type="MassIVE" id="O15522"/>
<dbReference type="PaxDb" id="9606-ENSP00000258829"/>
<dbReference type="PeptideAtlas" id="O15522"/>
<dbReference type="ProteomicsDB" id="48722"/>
<dbReference type="Antibodypedia" id="9891">
    <property type="antibodies" value="204 antibodies from 28 providers"/>
</dbReference>
<dbReference type="DNASU" id="26257"/>
<dbReference type="Ensembl" id="ENST00000258829.6">
    <property type="protein sequence ID" value="ENSP00000258829.4"/>
    <property type="gene ID" value="ENSG00000136327.7"/>
</dbReference>
<dbReference type="GeneID" id="26257"/>
<dbReference type="KEGG" id="hsa:26257"/>
<dbReference type="MANE-Select" id="ENST00000258829.6">
    <property type="protein sequence ID" value="ENSP00000258829.4"/>
    <property type="RefSeq nucleotide sequence ID" value="NM_014360.4"/>
    <property type="RefSeq protein sequence ID" value="NP_055175.2"/>
</dbReference>
<dbReference type="UCSC" id="uc001wtx.4">
    <property type="organism name" value="human"/>
</dbReference>
<dbReference type="AGR" id="HGNC:16364"/>
<dbReference type="CTD" id="26257"/>
<dbReference type="DisGeNET" id="26257"/>
<dbReference type="GeneCards" id="NKX2-8"/>
<dbReference type="HGNC" id="HGNC:16364">
    <property type="gene designation" value="NKX2-8"/>
</dbReference>
<dbReference type="HPA" id="ENSG00000136327">
    <property type="expression patterns" value="Group enriched (brain, esophagus, testis)"/>
</dbReference>
<dbReference type="MIM" id="603245">
    <property type="type" value="gene"/>
</dbReference>
<dbReference type="neXtProt" id="NX_O15522"/>
<dbReference type="OpenTargets" id="ENSG00000136327"/>
<dbReference type="PharmGKB" id="PA38402"/>
<dbReference type="VEuPathDB" id="HostDB:ENSG00000136327"/>
<dbReference type="eggNOG" id="KOG0842">
    <property type="taxonomic scope" value="Eukaryota"/>
</dbReference>
<dbReference type="GeneTree" id="ENSGT00940000161610"/>
<dbReference type="HOGENOM" id="CLU_049543_0_3_1"/>
<dbReference type="InParanoid" id="O15522"/>
<dbReference type="OMA" id="AWRDFWS"/>
<dbReference type="OrthoDB" id="6159439at2759"/>
<dbReference type="PAN-GO" id="O15522">
    <property type="GO annotations" value="5 GO annotations based on evolutionary models"/>
</dbReference>
<dbReference type="PhylomeDB" id="O15522"/>
<dbReference type="TreeFam" id="TF351204"/>
<dbReference type="PathwayCommons" id="O15522"/>
<dbReference type="SignaLink" id="O15522"/>
<dbReference type="BioGRID-ORCS" id="26257">
    <property type="hits" value="10 hits in 1146 CRISPR screens"/>
</dbReference>
<dbReference type="GenomeRNAi" id="26257"/>
<dbReference type="Pharos" id="O15522">
    <property type="development level" value="Tbio"/>
</dbReference>
<dbReference type="PRO" id="PR:O15522"/>
<dbReference type="Proteomes" id="UP000005640">
    <property type="component" value="Chromosome 14"/>
</dbReference>
<dbReference type="RNAct" id="O15522">
    <property type="molecule type" value="protein"/>
</dbReference>
<dbReference type="Bgee" id="ENSG00000136327">
    <property type="expression patterns" value="Expressed in C1 segment of cervical spinal cord and 49 other cell types or tissues"/>
</dbReference>
<dbReference type="GO" id="GO:0000785">
    <property type="term" value="C:chromatin"/>
    <property type="evidence" value="ECO:0000247"/>
    <property type="project" value="NTNU_SB"/>
</dbReference>
<dbReference type="GO" id="GO:0005634">
    <property type="term" value="C:nucleus"/>
    <property type="evidence" value="ECO:0000318"/>
    <property type="project" value="GO_Central"/>
</dbReference>
<dbReference type="GO" id="GO:0001228">
    <property type="term" value="F:DNA-binding transcription activator activity, RNA polymerase II-specific"/>
    <property type="evidence" value="ECO:0000314"/>
    <property type="project" value="NTNU_SB"/>
</dbReference>
<dbReference type="GO" id="GO:0003700">
    <property type="term" value="F:DNA-binding transcription factor activity"/>
    <property type="evidence" value="ECO:0000314"/>
    <property type="project" value="UniProtKB"/>
</dbReference>
<dbReference type="GO" id="GO:0000981">
    <property type="term" value="F:DNA-binding transcription factor activity, RNA polymerase II-specific"/>
    <property type="evidence" value="ECO:0000247"/>
    <property type="project" value="NTNU_SB"/>
</dbReference>
<dbReference type="GO" id="GO:0003690">
    <property type="term" value="F:double-stranded DNA binding"/>
    <property type="evidence" value="ECO:0000314"/>
    <property type="project" value="UniProtKB"/>
</dbReference>
<dbReference type="GO" id="GO:0000978">
    <property type="term" value="F:RNA polymerase II cis-regulatory region sequence-specific DNA binding"/>
    <property type="evidence" value="ECO:0000314"/>
    <property type="project" value="NTNU_SB"/>
</dbReference>
<dbReference type="GO" id="GO:0043565">
    <property type="term" value="F:sequence-specific DNA binding"/>
    <property type="evidence" value="ECO:0000314"/>
    <property type="project" value="UniProtKB"/>
</dbReference>
<dbReference type="GO" id="GO:1990837">
    <property type="term" value="F:sequence-specific double-stranded DNA binding"/>
    <property type="evidence" value="ECO:0000314"/>
    <property type="project" value="ARUK-UCL"/>
</dbReference>
<dbReference type="GO" id="GO:0007409">
    <property type="term" value="P:axonogenesis"/>
    <property type="evidence" value="ECO:0007669"/>
    <property type="project" value="Ensembl"/>
</dbReference>
<dbReference type="GO" id="GO:0030154">
    <property type="term" value="P:cell differentiation"/>
    <property type="evidence" value="ECO:0000318"/>
    <property type="project" value="GO_Central"/>
</dbReference>
<dbReference type="GO" id="GO:0006351">
    <property type="term" value="P:DNA-templated transcription"/>
    <property type="evidence" value="ECO:0000314"/>
    <property type="project" value="UniProtKB"/>
</dbReference>
<dbReference type="GO" id="GO:0050673">
    <property type="term" value="P:epithelial cell proliferation"/>
    <property type="evidence" value="ECO:0007669"/>
    <property type="project" value="Ensembl"/>
</dbReference>
<dbReference type="GO" id="GO:0001889">
    <property type="term" value="P:liver development"/>
    <property type="evidence" value="ECO:0000303"/>
    <property type="project" value="UniProtKB"/>
</dbReference>
<dbReference type="GO" id="GO:0030324">
    <property type="term" value="P:lung development"/>
    <property type="evidence" value="ECO:0007669"/>
    <property type="project" value="Ensembl"/>
</dbReference>
<dbReference type="GO" id="GO:0050680">
    <property type="term" value="P:negative regulation of epithelial cell proliferation"/>
    <property type="evidence" value="ECO:0007669"/>
    <property type="project" value="Ensembl"/>
</dbReference>
<dbReference type="GO" id="GO:0045944">
    <property type="term" value="P:positive regulation of transcription by RNA polymerase II"/>
    <property type="evidence" value="ECO:0000314"/>
    <property type="project" value="NTNU_SB"/>
</dbReference>
<dbReference type="GO" id="GO:0006357">
    <property type="term" value="P:regulation of transcription by RNA polymerase II"/>
    <property type="evidence" value="ECO:0000318"/>
    <property type="project" value="GO_Central"/>
</dbReference>
<dbReference type="GO" id="GO:0006366">
    <property type="term" value="P:transcription by RNA polymerase II"/>
    <property type="evidence" value="ECO:0000314"/>
    <property type="project" value="UniProtKB"/>
</dbReference>
<dbReference type="CDD" id="cd00086">
    <property type="entry name" value="homeodomain"/>
    <property type="match status" value="1"/>
</dbReference>
<dbReference type="FunFam" id="1.10.10.60:FF:000101">
    <property type="entry name" value="NK2 homeobox 8"/>
    <property type="match status" value="1"/>
</dbReference>
<dbReference type="Gene3D" id="1.10.10.60">
    <property type="entry name" value="Homeodomain-like"/>
    <property type="match status" value="1"/>
</dbReference>
<dbReference type="InterPro" id="IPR001356">
    <property type="entry name" value="HD"/>
</dbReference>
<dbReference type="InterPro" id="IPR020479">
    <property type="entry name" value="HD_metazoa"/>
</dbReference>
<dbReference type="InterPro" id="IPR017970">
    <property type="entry name" value="Homeobox_CS"/>
</dbReference>
<dbReference type="InterPro" id="IPR050394">
    <property type="entry name" value="Homeobox_NK-like"/>
</dbReference>
<dbReference type="InterPro" id="IPR009057">
    <property type="entry name" value="Homeodomain-like_sf"/>
</dbReference>
<dbReference type="PANTHER" id="PTHR24340">
    <property type="entry name" value="HOMEOBOX PROTEIN NKX"/>
    <property type="match status" value="1"/>
</dbReference>
<dbReference type="PANTHER" id="PTHR24340:SF27">
    <property type="entry name" value="HOMEOBOX PROTEIN NKX-2.8"/>
    <property type="match status" value="1"/>
</dbReference>
<dbReference type="Pfam" id="PF00046">
    <property type="entry name" value="Homeodomain"/>
    <property type="match status" value="1"/>
</dbReference>
<dbReference type="PRINTS" id="PR00024">
    <property type="entry name" value="HOMEOBOX"/>
</dbReference>
<dbReference type="SMART" id="SM00389">
    <property type="entry name" value="HOX"/>
    <property type="match status" value="1"/>
</dbReference>
<dbReference type="SUPFAM" id="SSF46689">
    <property type="entry name" value="Homeodomain-like"/>
    <property type="match status" value="1"/>
</dbReference>
<dbReference type="PROSITE" id="PS00027">
    <property type="entry name" value="HOMEOBOX_1"/>
    <property type="match status" value="1"/>
</dbReference>
<dbReference type="PROSITE" id="PS50071">
    <property type="entry name" value="HOMEOBOX_2"/>
    <property type="match status" value="1"/>
</dbReference>
<gene>
    <name type="primary">NKX2-8</name>
    <name type="synonym">NKX-2.8</name>
    <name type="synonym">NKX2G</name>
    <name type="synonym">NKX2H</name>
</gene>
<sequence>MATSGRLSFTVRSLLDLPEQDAQHLPRREPEPRAPQPDPCAAWLDSERGHYPSSDESSLETSPPDSSQRPSARPASPGSDAEKRKKRRVLFSKAQTLELERRFRQQRYLSAPEREQLASLLRLTPTQVKIWFQNHRYKLKRARAPGAAESPDLAASAELHAAPGLLRRVVVPVLVRDGQPCGGGGGGEVGTAAAQEKCGAPPAAACPLPGYPAFGPGSALGLFPAYQHLASPALVSWNW</sequence>